<dbReference type="EMBL" id="AF106620">
    <property type="protein sequence ID" value="AAD19594.1"/>
    <property type="molecule type" value="mRNA"/>
</dbReference>
<dbReference type="EMBL" id="BC010830">
    <property type="protein sequence ID" value="AAH10830.1"/>
    <property type="molecule type" value="mRNA"/>
</dbReference>
<dbReference type="CCDS" id="CCDS15318.1"/>
<dbReference type="RefSeq" id="NP_035720.1">
    <property type="nucleotide sequence ID" value="NM_011590.2"/>
</dbReference>
<dbReference type="SMR" id="Q9Z0V8"/>
<dbReference type="BioGRID" id="204199">
    <property type="interactions" value="1"/>
</dbReference>
<dbReference type="FunCoup" id="Q9Z0V8">
    <property type="interactions" value="2048"/>
</dbReference>
<dbReference type="STRING" id="10090.ENSMUSP00000079883"/>
<dbReference type="PhosphoSitePlus" id="Q9Z0V8"/>
<dbReference type="SwissPalm" id="Q9Z0V8"/>
<dbReference type="jPOST" id="Q9Z0V8"/>
<dbReference type="PaxDb" id="10090-ENSMUSP00000079883"/>
<dbReference type="ProteomicsDB" id="259387"/>
<dbReference type="Pumba" id="Q9Z0V8"/>
<dbReference type="Antibodypedia" id="34520">
    <property type="antibodies" value="168 antibodies from 29 providers"/>
</dbReference>
<dbReference type="DNASU" id="21854"/>
<dbReference type="Ensembl" id="ENSMUST00000081104.10">
    <property type="protein sequence ID" value="ENSMUSP00000079883.4"/>
    <property type="gene ID" value="ENSMUSG00000062580.10"/>
</dbReference>
<dbReference type="GeneID" id="21854"/>
<dbReference type="KEGG" id="mmu:21854"/>
<dbReference type="UCSC" id="uc007csz.1">
    <property type="organism name" value="mouse"/>
</dbReference>
<dbReference type="AGR" id="MGI:1343131"/>
<dbReference type="CTD" id="10440"/>
<dbReference type="MGI" id="MGI:1343131">
    <property type="gene designation" value="Timm17a"/>
</dbReference>
<dbReference type="VEuPathDB" id="HostDB:ENSMUSG00000062580"/>
<dbReference type="eggNOG" id="KOG1652">
    <property type="taxonomic scope" value="Eukaryota"/>
</dbReference>
<dbReference type="GeneTree" id="ENSGT00390000017780"/>
<dbReference type="HOGENOM" id="CLU_087811_1_1_1"/>
<dbReference type="InParanoid" id="Q9Z0V8"/>
<dbReference type="OMA" id="IMFTRIS"/>
<dbReference type="OrthoDB" id="2261329at2759"/>
<dbReference type="PhylomeDB" id="Q9Z0V8"/>
<dbReference type="TreeFam" id="TF106195"/>
<dbReference type="BioGRID-ORCS" id="21854">
    <property type="hits" value="13 hits in 81 CRISPR screens"/>
</dbReference>
<dbReference type="ChiTaRS" id="Timm17a">
    <property type="organism name" value="mouse"/>
</dbReference>
<dbReference type="PRO" id="PR:Q9Z0V8"/>
<dbReference type="Proteomes" id="UP000000589">
    <property type="component" value="Chromosome 1"/>
</dbReference>
<dbReference type="RNAct" id="Q9Z0V8">
    <property type="molecule type" value="protein"/>
</dbReference>
<dbReference type="Bgee" id="ENSMUSG00000062580">
    <property type="expression patterns" value="Expressed in morula and 260 other cell types or tissues"/>
</dbReference>
<dbReference type="ExpressionAtlas" id="Q9Z0V8">
    <property type="expression patterns" value="baseline and differential"/>
</dbReference>
<dbReference type="GO" id="GO:0005739">
    <property type="term" value="C:mitochondrion"/>
    <property type="evidence" value="ECO:0007005"/>
    <property type="project" value="MGI"/>
</dbReference>
<dbReference type="GO" id="GO:0005654">
    <property type="term" value="C:nucleoplasm"/>
    <property type="evidence" value="ECO:0007669"/>
    <property type="project" value="Ensembl"/>
</dbReference>
<dbReference type="GO" id="GO:0005744">
    <property type="term" value="C:TIM23 mitochondrial import inner membrane translocase complex"/>
    <property type="evidence" value="ECO:0007669"/>
    <property type="project" value="Ensembl"/>
</dbReference>
<dbReference type="GO" id="GO:0008320">
    <property type="term" value="F:protein transmembrane transporter activity"/>
    <property type="evidence" value="ECO:0007669"/>
    <property type="project" value="InterPro"/>
</dbReference>
<dbReference type="GO" id="GO:0030150">
    <property type="term" value="P:protein import into mitochondrial matrix"/>
    <property type="evidence" value="ECO:0007669"/>
    <property type="project" value="InterPro"/>
</dbReference>
<dbReference type="InterPro" id="IPR005678">
    <property type="entry name" value="Tim17"/>
</dbReference>
<dbReference type="NCBIfam" id="TIGR00980">
    <property type="entry name" value="3a0801so1tim17"/>
    <property type="match status" value="1"/>
</dbReference>
<dbReference type="PANTHER" id="PTHR10485">
    <property type="entry name" value="MITOCHONDRIAL IMPORT INNER MEMBRANE TRANSLOCASE SUBUNIT TIM-17"/>
    <property type="match status" value="1"/>
</dbReference>
<dbReference type="PANTHER" id="PTHR10485:SF1">
    <property type="entry name" value="MITOCHONDRIAL IMPORT INNER MEMBRANE TRANSLOCASE SUBUNIT TIM17-A"/>
    <property type="match status" value="1"/>
</dbReference>
<dbReference type="Pfam" id="PF02466">
    <property type="entry name" value="Tim17"/>
    <property type="match status" value="1"/>
</dbReference>
<organism>
    <name type="scientific">Mus musculus</name>
    <name type="common">Mouse</name>
    <dbReference type="NCBI Taxonomy" id="10090"/>
    <lineage>
        <taxon>Eukaryota</taxon>
        <taxon>Metazoa</taxon>
        <taxon>Chordata</taxon>
        <taxon>Craniata</taxon>
        <taxon>Vertebrata</taxon>
        <taxon>Euteleostomi</taxon>
        <taxon>Mammalia</taxon>
        <taxon>Eutheria</taxon>
        <taxon>Euarchontoglires</taxon>
        <taxon>Glires</taxon>
        <taxon>Rodentia</taxon>
        <taxon>Myomorpha</taxon>
        <taxon>Muroidea</taxon>
        <taxon>Muridae</taxon>
        <taxon>Murinae</taxon>
        <taxon>Mus</taxon>
        <taxon>Mus</taxon>
    </lineage>
</organism>
<accession>Q9Z0V8</accession>
<evidence type="ECO:0000250" key="1">
    <source>
        <dbReference type="UniProtKB" id="P39515"/>
    </source>
</evidence>
<evidence type="ECO:0000250" key="2">
    <source>
        <dbReference type="UniProtKB" id="Q99595"/>
    </source>
</evidence>
<evidence type="ECO:0000255" key="3"/>
<evidence type="ECO:0000256" key="4">
    <source>
        <dbReference type="SAM" id="MobiDB-lite"/>
    </source>
</evidence>
<evidence type="ECO:0000305" key="5"/>
<reference key="1">
    <citation type="journal article" date="1999" name="J. Mol. Biol.">
        <title>Genetic and structural characterization of the human mitochondrial inner membrane translocase.</title>
        <authorList>
            <person name="Bauer M.F."/>
            <person name="Gempel K."/>
            <person name="Reichert A.S."/>
            <person name="Rappold G.A."/>
            <person name="Lichtner P."/>
            <person name="Gerbitz K.-D."/>
            <person name="Neupert W."/>
            <person name="Brunner M."/>
            <person name="Hofmann S."/>
        </authorList>
    </citation>
    <scope>NUCLEOTIDE SEQUENCE [MRNA]</scope>
</reference>
<reference key="2">
    <citation type="journal article" date="2004" name="Genome Res.">
        <title>The status, quality, and expansion of the NIH full-length cDNA project: the Mammalian Gene Collection (MGC).</title>
        <authorList>
            <consortium name="The MGC Project Team"/>
        </authorList>
    </citation>
    <scope>NUCLEOTIDE SEQUENCE [LARGE SCALE MRNA]</scope>
    <source>
        <strain>FVB/N</strain>
        <tissue>Kidney</tissue>
    </source>
</reference>
<reference key="3">
    <citation type="journal article" date="2010" name="Cell">
        <title>A tissue-specific atlas of mouse protein phosphorylation and expression.</title>
        <authorList>
            <person name="Huttlin E.L."/>
            <person name="Jedrychowski M.P."/>
            <person name="Elias J.E."/>
            <person name="Goswami T."/>
            <person name="Rad R."/>
            <person name="Beausoleil S.A."/>
            <person name="Villen J."/>
            <person name="Haas W."/>
            <person name="Sowa M.E."/>
            <person name="Gygi S.P."/>
        </authorList>
    </citation>
    <scope>IDENTIFICATION BY MASS SPECTROMETRY [LARGE SCALE ANALYSIS]</scope>
    <source>
        <tissue>Brown adipose tissue</tissue>
        <tissue>Heart</tissue>
        <tissue>Kidney</tissue>
        <tissue>Liver</tissue>
        <tissue>Lung</tissue>
        <tissue>Testis</tissue>
    </source>
</reference>
<proteinExistence type="evidence at protein level"/>
<gene>
    <name type="primary">Timm17a</name>
    <name type="synonym">Tim17a</name>
</gene>
<sequence length="171" mass="18112">MEEYAREPCPWRIVDDCGGAFTMGTIGGGIFQAFKGFRNSPVGINHRLRGSLTAIKTRAPQLGGSFAVWGGLFSTIDCSMVQIRGKEDPWNSITSGALTGAILAARNGPVAMVGSAAMGGILLALIEGAGILLTRFASAQFPNGPQFTEDHSQLPSSQLPSSPFGDYRQYQ</sequence>
<feature type="chain" id="PRO_0000210285" description="Mitochondrial import inner membrane translocase subunit Tim17-A">
    <location>
        <begin position="1"/>
        <end position="171"/>
    </location>
</feature>
<feature type="transmembrane region" description="Helical" evidence="3">
    <location>
        <begin position="17"/>
        <end position="37"/>
    </location>
</feature>
<feature type="transmembrane region" description="Helical" evidence="3">
    <location>
        <begin position="63"/>
        <end position="77"/>
    </location>
</feature>
<feature type="transmembrane region" description="Helical" evidence="3">
    <location>
        <begin position="113"/>
        <end position="133"/>
    </location>
</feature>
<feature type="region of interest" description="Disordered" evidence="4">
    <location>
        <begin position="144"/>
        <end position="171"/>
    </location>
</feature>
<feature type="compositionally biased region" description="Low complexity" evidence="4">
    <location>
        <begin position="153"/>
        <end position="163"/>
    </location>
</feature>
<feature type="disulfide bond" evidence="1">
    <location>
        <begin position="9"/>
        <end position="78"/>
    </location>
</feature>
<keyword id="KW-1015">Disulfide bond</keyword>
<keyword id="KW-0472">Membrane</keyword>
<keyword id="KW-0496">Mitochondrion</keyword>
<keyword id="KW-0999">Mitochondrion inner membrane</keyword>
<keyword id="KW-0653">Protein transport</keyword>
<keyword id="KW-1185">Reference proteome</keyword>
<keyword id="KW-0811">Translocation</keyword>
<keyword id="KW-0812">Transmembrane</keyword>
<keyword id="KW-1133">Transmembrane helix</keyword>
<keyword id="KW-0813">Transport</keyword>
<protein>
    <recommendedName>
        <fullName>Mitochondrial import inner membrane translocase subunit Tim17-A</fullName>
    </recommendedName>
    <alternativeName>
        <fullName>Inner membrane preprotein translocase Tim17a</fullName>
    </alternativeName>
</protein>
<name>TI17A_MOUSE</name>
<comment type="function">
    <text evidence="2">Essential component of the TIM23 complex, a complex that mediates the translocation of transit peptide-containing proteins across the mitochondrial inner membrane.</text>
</comment>
<comment type="subunit">
    <text evidence="2">Component of the TIM23 complex at least composed of TIMM23, TIMM17 (TIMM17A or TIMM17B) and TIMM50. The complex interacts with the TIMM44 component of the PAM complex and with DNAJC15.</text>
</comment>
<comment type="subcellular location">
    <subcellularLocation>
        <location evidence="2">Mitochondrion inner membrane</location>
        <topology evidence="3">Multi-pass membrane protein</topology>
    </subcellularLocation>
</comment>
<comment type="PTM">
    <text evidence="2">Degraded by YMEL1 downstream of the integrated stress response (ISR).</text>
</comment>
<comment type="similarity">
    <text evidence="5">Belongs to the Tim17/Tim22/Tim23 family.</text>
</comment>